<proteinExistence type="inferred from homology"/>
<dbReference type="EC" id="2.6.1.9" evidence="1"/>
<dbReference type="EMBL" id="CP001661">
    <property type="protein sequence ID" value="ACT16305.1"/>
    <property type="molecule type" value="Genomic_DNA"/>
</dbReference>
<dbReference type="SMR" id="C6E916"/>
<dbReference type="STRING" id="443144.GM21_0220"/>
<dbReference type="KEGG" id="gem:GM21_0220"/>
<dbReference type="eggNOG" id="COG0079">
    <property type="taxonomic scope" value="Bacteria"/>
</dbReference>
<dbReference type="HOGENOM" id="CLU_017584_3_0_7"/>
<dbReference type="OrthoDB" id="9813612at2"/>
<dbReference type="UniPathway" id="UPA00031">
    <property type="reaction ID" value="UER00012"/>
</dbReference>
<dbReference type="GO" id="GO:0004400">
    <property type="term" value="F:histidinol-phosphate transaminase activity"/>
    <property type="evidence" value="ECO:0007669"/>
    <property type="project" value="UniProtKB-UniRule"/>
</dbReference>
<dbReference type="GO" id="GO:0030170">
    <property type="term" value="F:pyridoxal phosphate binding"/>
    <property type="evidence" value="ECO:0007669"/>
    <property type="project" value="InterPro"/>
</dbReference>
<dbReference type="GO" id="GO:0000105">
    <property type="term" value="P:L-histidine biosynthetic process"/>
    <property type="evidence" value="ECO:0007669"/>
    <property type="project" value="UniProtKB-UniRule"/>
</dbReference>
<dbReference type="CDD" id="cd00609">
    <property type="entry name" value="AAT_like"/>
    <property type="match status" value="1"/>
</dbReference>
<dbReference type="Gene3D" id="3.90.1150.10">
    <property type="entry name" value="Aspartate Aminotransferase, domain 1"/>
    <property type="match status" value="1"/>
</dbReference>
<dbReference type="Gene3D" id="3.40.640.10">
    <property type="entry name" value="Type I PLP-dependent aspartate aminotransferase-like (Major domain)"/>
    <property type="match status" value="1"/>
</dbReference>
<dbReference type="HAMAP" id="MF_01023">
    <property type="entry name" value="HisC_aminotrans_2"/>
    <property type="match status" value="1"/>
</dbReference>
<dbReference type="InterPro" id="IPR001917">
    <property type="entry name" value="Aminotrans_II_pyridoxalP_BS"/>
</dbReference>
<dbReference type="InterPro" id="IPR004839">
    <property type="entry name" value="Aminotransferase_I/II_large"/>
</dbReference>
<dbReference type="InterPro" id="IPR005861">
    <property type="entry name" value="HisP_aminotrans"/>
</dbReference>
<dbReference type="InterPro" id="IPR015424">
    <property type="entry name" value="PyrdxlP-dep_Trfase"/>
</dbReference>
<dbReference type="InterPro" id="IPR015421">
    <property type="entry name" value="PyrdxlP-dep_Trfase_major"/>
</dbReference>
<dbReference type="InterPro" id="IPR015422">
    <property type="entry name" value="PyrdxlP-dep_Trfase_small"/>
</dbReference>
<dbReference type="NCBIfam" id="TIGR01141">
    <property type="entry name" value="hisC"/>
    <property type="match status" value="1"/>
</dbReference>
<dbReference type="PANTHER" id="PTHR42885:SF2">
    <property type="entry name" value="HISTIDINOL-PHOSPHATE AMINOTRANSFERASE"/>
    <property type="match status" value="1"/>
</dbReference>
<dbReference type="PANTHER" id="PTHR42885">
    <property type="entry name" value="HISTIDINOL-PHOSPHATE AMINOTRANSFERASE-RELATED"/>
    <property type="match status" value="1"/>
</dbReference>
<dbReference type="Pfam" id="PF00155">
    <property type="entry name" value="Aminotran_1_2"/>
    <property type="match status" value="1"/>
</dbReference>
<dbReference type="SUPFAM" id="SSF53383">
    <property type="entry name" value="PLP-dependent transferases"/>
    <property type="match status" value="1"/>
</dbReference>
<dbReference type="PROSITE" id="PS00599">
    <property type="entry name" value="AA_TRANSFER_CLASS_2"/>
    <property type="match status" value="1"/>
</dbReference>
<name>HIS8_GEOSM</name>
<organism>
    <name type="scientific">Geobacter sp. (strain M21)</name>
    <dbReference type="NCBI Taxonomy" id="443144"/>
    <lineage>
        <taxon>Bacteria</taxon>
        <taxon>Pseudomonadati</taxon>
        <taxon>Thermodesulfobacteriota</taxon>
        <taxon>Desulfuromonadia</taxon>
        <taxon>Geobacterales</taxon>
        <taxon>Geobacteraceae</taxon>
        <taxon>Geobacter</taxon>
    </lineage>
</organism>
<sequence length="350" mass="38838">MIALRENIAEMAGYVPGFQPLDVASYIKLNTNENPYPPSPKVLEAIAKEAGEGLRRYPDAASVLAREEAAKVYGFDPSWIIMANGSDEVLNNLIRACAGEGEEIAFINPSYSYYGTLAEVQGARVRTFGLTESFEPEGIPEHYDGKLFFLTNPNAPLGFTYSQRYIADLAGRLSGVLVVDEAYVDFAEETSLDLVRSFDNVVVTRTFSKSYSLAGMRLGLAIARPELIAALNKIRDHYNLDRLAQAAAAAALADQPYFKECVRKIKETRAWFTAELQKFGYQVIPSSGNFVFASPPDRDGTRIYQGLYDRKILVRHFTDPKLAHGLRISIGSREEMEQTVKALRELGPGR</sequence>
<evidence type="ECO:0000255" key="1">
    <source>
        <dbReference type="HAMAP-Rule" id="MF_01023"/>
    </source>
</evidence>
<comment type="catalytic activity">
    <reaction evidence="1">
        <text>L-histidinol phosphate + 2-oxoglutarate = 3-(imidazol-4-yl)-2-oxopropyl phosphate + L-glutamate</text>
        <dbReference type="Rhea" id="RHEA:23744"/>
        <dbReference type="ChEBI" id="CHEBI:16810"/>
        <dbReference type="ChEBI" id="CHEBI:29985"/>
        <dbReference type="ChEBI" id="CHEBI:57766"/>
        <dbReference type="ChEBI" id="CHEBI:57980"/>
        <dbReference type="EC" id="2.6.1.9"/>
    </reaction>
</comment>
<comment type="cofactor">
    <cofactor evidence="1">
        <name>pyridoxal 5'-phosphate</name>
        <dbReference type="ChEBI" id="CHEBI:597326"/>
    </cofactor>
</comment>
<comment type="pathway">
    <text evidence="1">Amino-acid biosynthesis; L-histidine biosynthesis; L-histidine from 5-phospho-alpha-D-ribose 1-diphosphate: step 7/9.</text>
</comment>
<comment type="subunit">
    <text evidence="1">Homodimer.</text>
</comment>
<comment type="similarity">
    <text evidence="1">Belongs to the class-II pyridoxal-phosphate-dependent aminotransferase family. Histidinol-phosphate aminotransferase subfamily.</text>
</comment>
<protein>
    <recommendedName>
        <fullName evidence="1">Histidinol-phosphate aminotransferase</fullName>
        <ecNumber evidence="1">2.6.1.9</ecNumber>
    </recommendedName>
    <alternativeName>
        <fullName evidence="1">Imidazole acetol-phosphate transaminase</fullName>
    </alternativeName>
</protein>
<keyword id="KW-0028">Amino-acid biosynthesis</keyword>
<keyword id="KW-0032">Aminotransferase</keyword>
<keyword id="KW-0368">Histidine biosynthesis</keyword>
<keyword id="KW-0663">Pyridoxal phosphate</keyword>
<keyword id="KW-0808">Transferase</keyword>
<accession>C6E916</accession>
<feature type="chain" id="PRO_1000213307" description="Histidinol-phosphate aminotransferase">
    <location>
        <begin position="1"/>
        <end position="350"/>
    </location>
</feature>
<feature type="modified residue" description="N6-(pyridoxal phosphate)lysine" evidence="1">
    <location>
        <position position="209"/>
    </location>
</feature>
<gene>
    <name evidence="1" type="primary">hisC</name>
    <name type="ordered locus">GM21_0220</name>
</gene>
<reference key="1">
    <citation type="submission" date="2009-07" db="EMBL/GenBank/DDBJ databases">
        <title>Complete sequence of Geobacter sp. M21.</title>
        <authorList>
            <consortium name="US DOE Joint Genome Institute"/>
            <person name="Lucas S."/>
            <person name="Copeland A."/>
            <person name="Lapidus A."/>
            <person name="Glavina del Rio T."/>
            <person name="Dalin E."/>
            <person name="Tice H."/>
            <person name="Bruce D."/>
            <person name="Goodwin L."/>
            <person name="Pitluck S."/>
            <person name="Saunders E."/>
            <person name="Brettin T."/>
            <person name="Detter J.C."/>
            <person name="Han C."/>
            <person name="Larimer F."/>
            <person name="Land M."/>
            <person name="Hauser L."/>
            <person name="Kyrpides N."/>
            <person name="Ovchinnikova G."/>
            <person name="Lovley D."/>
        </authorList>
    </citation>
    <scope>NUCLEOTIDE SEQUENCE [LARGE SCALE GENOMIC DNA]</scope>
    <source>
        <strain>M21</strain>
    </source>
</reference>